<proteinExistence type="inferred from homology"/>
<evidence type="ECO:0000255" key="1">
    <source>
        <dbReference type="HAMAP-Rule" id="MF_00051"/>
    </source>
</evidence>
<gene>
    <name evidence="1" type="primary">glyA1</name>
    <name type="synonym">glyA-1</name>
    <name type="ordered locus">BMA2075</name>
</gene>
<comment type="function">
    <text evidence="1">Catalyzes the reversible interconversion of serine and glycine with tetrahydrofolate (THF) serving as the one-carbon carrier. This reaction serves as the major source of one-carbon groups required for the biosynthesis of purines, thymidylate, methionine, and other important biomolecules. Also exhibits THF-independent aldolase activity toward beta-hydroxyamino acids, producing glycine and aldehydes, via a retro-aldol mechanism.</text>
</comment>
<comment type="catalytic activity">
    <reaction evidence="1">
        <text>(6R)-5,10-methylene-5,6,7,8-tetrahydrofolate + glycine + H2O = (6S)-5,6,7,8-tetrahydrofolate + L-serine</text>
        <dbReference type="Rhea" id="RHEA:15481"/>
        <dbReference type="ChEBI" id="CHEBI:15377"/>
        <dbReference type="ChEBI" id="CHEBI:15636"/>
        <dbReference type="ChEBI" id="CHEBI:33384"/>
        <dbReference type="ChEBI" id="CHEBI:57305"/>
        <dbReference type="ChEBI" id="CHEBI:57453"/>
        <dbReference type="EC" id="2.1.2.1"/>
    </reaction>
</comment>
<comment type="cofactor">
    <cofactor evidence="1">
        <name>pyridoxal 5'-phosphate</name>
        <dbReference type="ChEBI" id="CHEBI:597326"/>
    </cofactor>
</comment>
<comment type="pathway">
    <text evidence="1">One-carbon metabolism; tetrahydrofolate interconversion.</text>
</comment>
<comment type="pathway">
    <text evidence="1">Amino-acid biosynthesis; glycine biosynthesis; glycine from L-serine: step 1/1.</text>
</comment>
<comment type="subunit">
    <text evidence="1">Homodimer.</text>
</comment>
<comment type="subcellular location">
    <subcellularLocation>
        <location evidence="1">Cytoplasm</location>
    </subcellularLocation>
</comment>
<comment type="similarity">
    <text evidence="1">Belongs to the SHMT family.</text>
</comment>
<name>GLYA1_BURMA</name>
<reference key="1">
    <citation type="journal article" date="2004" name="Proc. Natl. Acad. Sci. U.S.A.">
        <title>Structural flexibility in the Burkholderia mallei genome.</title>
        <authorList>
            <person name="Nierman W.C."/>
            <person name="DeShazer D."/>
            <person name="Kim H.S."/>
            <person name="Tettelin H."/>
            <person name="Nelson K.E."/>
            <person name="Feldblyum T.V."/>
            <person name="Ulrich R.L."/>
            <person name="Ronning C.M."/>
            <person name="Brinkac L.M."/>
            <person name="Daugherty S.C."/>
            <person name="Davidsen T.D."/>
            <person name="DeBoy R.T."/>
            <person name="Dimitrov G."/>
            <person name="Dodson R.J."/>
            <person name="Durkin A.S."/>
            <person name="Gwinn M.L."/>
            <person name="Haft D.H."/>
            <person name="Khouri H.M."/>
            <person name="Kolonay J.F."/>
            <person name="Madupu R."/>
            <person name="Mohammoud Y."/>
            <person name="Nelson W.C."/>
            <person name="Radune D."/>
            <person name="Romero C.M."/>
            <person name="Sarria S."/>
            <person name="Selengut J."/>
            <person name="Shamblin C."/>
            <person name="Sullivan S.A."/>
            <person name="White O."/>
            <person name="Yu Y."/>
            <person name="Zafar N."/>
            <person name="Zhou L."/>
            <person name="Fraser C.M."/>
        </authorList>
    </citation>
    <scope>NUCLEOTIDE SEQUENCE [LARGE SCALE GENOMIC DNA]</scope>
    <source>
        <strain>ATCC 23344</strain>
    </source>
</reference>
<sequence>MFDRAQSTIANVDPEIWQAIQQENVRQEEHIELIASENYTSPAVMAAQGSQLTNKYAEGYPGKRYYGGCEYVDIVEQLAIDRVKALFGAEAANVQPNSGSQANQGVFFAMLKPGDTIMGMSLAHGGHLTHGSPVNMSGKWFNVVSYGLNEAEDIDYEAAEQLAHEHKPKLIVAGASAFALKIDFERLAKIAKAVGAYLMVDMAHYAGLIAAGVYPNPVPHADFVTTTTHKSLRGPRGGVILMKAEYEKQINSAIFPGIQGGPLMHVIAAKAVAFKEALSPEFKEYQQKVVENARVLAQTLVKRGLRIVSGRTESHVMLVDLRAKNITGKAAEAALGNAHITVNKNAIPNDPEKPFVTSGVRLGSPAMTTRGFGPQEAELVGNLIADVLEHPEDAATIERVRAQVAELTKRFPVYR</sequence>
<organism>
    <name type="scientific">Burkholderia mallei (strain ATCC 23344)</name>
    <dbReference type="NCBI Taxonomy" id="243160"/>
    <lineage>
        <taxon>Bacteria</taxon>
        <taxon>Pseudomonadati</taxon>
        <taxon>Pseudomonadota</taxon>
        <taxon>Betaproteobacteria</taxon>
        <taxon>Burkholderiales</taxon>
        <taxon>Burkholderiaceae</taxon>
        <taxon>Burkholderia</taxon>
        <taxon>pseudomallei group</taxon>
    </lineage>
</organism>
<accession>Q62I16</accession>
<dbReference type="EC" id="2.1.2.1" evidence="1"/>
<dbReference type="EMBL" id="CP000010">
    <property type="protein sequence ID" value="AAU49635.1"/>
    <property type="molecule type" value="Genomic_DNA"/>
</dbReference>
<dbReference type="RefSeq" id="YP_103654.1">
    <property type="nucleotide sequence ID" value="NC_006348.1"/>
</dbReference>
<dbReference type="SMR" id="Q62I16"/>
<dbReference type="KEGG" id="bma:BMA2075"/>
<dbReference type="PATRIC" id="fig|243160.12.peg.2146"/>
<dbReference type="eggNOG" id="COG0112">
    <property type="taxonomic scope" value="Bacteria"/>
</dbReference>
<dbReference type="HOGENOM" id="CLU_022477_2_1_4"/>
<dbReference type="UniPathway" id="UPA00193"/>
<dbReference type="UniPathway" id="UPA00288">
    <property type="reaction ID" value="UER01023"/>
</dbReference>
<dbReference type="Proteomes" id="UP000006693">
    <property type="component" value="Chromosome 1"/>
</dbReference>
<dbReference type="GO" id="GO:0005829">
    <property type="term" value="C:cytosol"/>
    <property type="evidence" value="ECO:0007669"/>
    <property type="project" value="TreeGrafter"/>
</dbReference>
<dbReference type="GO" id="GO:0004372">
    <property type="term" value="F:glycine hydroxymethyltransferase activity"/>
    <property type="evidence" value="ECO:0007669"/>
    <property type="project" value="UniProtKB-UniRule"/>
</dbReference>
<dbReference type="GO" id="GO:0030170">
    <property type="term" value="F:pyridoxal phosphate binding"/>
    <property type="evidence" value="ECO:0007669"/>
    <property type="project" value="UniProtKB-UniRule"/>
</dbReference>
<dbReference type="GO" id="GO:0019264">
    <property type="term" value="P:glycine biosynthetic process from serine"/>
    <property type="evidence" value="ECO:0007669"/>
    <property type="project" value="UniProtKB-UniRule"/>
</dbReference>
<dbReference type="GO" id="GO:0035999">
    <property type="term" value="P:tetrahydrofolate interconversion"/>
    <property type="evidence" value="ECO:0007669"/>
    <property type="project" value="UniProtKB-UniRule"/>
</dbReference>
<dbReference type="CDD" id="cd00378">
    <property type="entry name" value="SHMT"/>
    <property type="match status" value="1"/>
</dbReference>
<dbReference type="FunFam" id="3.40.640.10:FF:000001">
    <property type="entry name" value="Serine hydroxymethyltransferase"/>
    <property type="match status" value="1"/>
</dbReference>
<dbReference type="FunFam" id="3.90.1150.10:FF:000003">
    <property type="entry name" value="Serine hydroxymethyltransferase"/>
    <property type="match status" value="1"/>
</dbReference>
<dbReference type="Gene3D" id="3.90.1150.10">
    <property type="entry name" value="Aspartate Aminotransferase, domain 1"/>
    <property type="match status" value="1"/>
</dbReference>
<dbReference type="Gene3D" id="3.40.640.10">
    <property type="entry name" value="Type I PLP-dependent aspartate aminotransferase-like (Major domain)"/>
    <property type="match status" value="1"/>
</dbReference>
<dbReference type="HAMAP" id="MF_00051">
    <property type="entry name" value="SHMT"/>
    <property type="match status" value="1"/>
</dbReference>
<dbReference type="InterPro" id="IPR015424">
    <property type="entry name" value="PyrdxlP-dep_Trfase"/>
</dbReference>
<dbReference type="InterPro" id="IPR015421">
    <property type="entry name" value="PyrdxlP-dep_Trfase_major"/>
</dbReference>
<dbReference type="InterPro" id="IPR015422">
    <property type="entry name" value="PyrdxlP-dep_Trfase_small"/>
</dbReference>
<dbReference type="InterPro" id="IPR001085">
    <property type="entry name" value="Ser_HO-MeTrfase"/>
</dbReference>
<dbReference type="InterPro" id="IPR049943">
    <property type="entry name" value="Ser_HO-MeTrfase-like"/>
</dbReference>
<dbReference type="InterPro" id="IPR019798">
    <property type="entry name" value="Ser_HO-MeTrfase_PLP_BS"/>
</dbReference>
<dbReference type="InterPro" id="IPR039429">
    <property type="entry name" value="SHMT-like_dom"/>
</dbReference>
<dbReference type="NCBIfam" id="NF000586">
    <property type="entry name" value="PRK00011.1"/>
    <property type="match status" value="1"/>
</dbReference>
<dbReference type="PANTHER" id="PTHR11680">
    <property type="entry name" value="SERINE HYDROXYMETHYLTRANSFERASE"/>
    <property type="match status" value="1"/>
</dbReference>
<dbReference type="PANTHER" id="PTHR11680:SF50">
    <property type="entry name" value="SERINE HYDROXYMETHYLTRANSFERASE"/>
    <property type="match status" value="1"/>
</dbReference>
<dbReference type="Pfam" id="PF00464">
    <property type="entry name" value="SHMT"/>
    <property type="match status" value="1"/>
</dbReference>
<dbReference type="PIRSF" id="PIRSF000412">
    <property type="entry name" value="SHMT"/>
    <property type="match status" value="1"/>
</dbReference>
<dbReference type="SUPFAM" id="SSF53383">
    <property type="entry name" value="PLP-dependent transferases"/>
    <property type="match status" value="1"/>
</dbReference>
<dbReference type="PROSITE" id="PS00096">
    <property type="entry name" value="SHMT"/>
    <property type="match status" value="1"/>
</dbReference>
<protein>
    <recommendedName>
        <fullName evidence="1">Serine hydroxymethyltransferase 1</fullName>
        <shortName evidence="1">SHMT 1</shortName>
        <shortName evidence="1">Serine methylase 1</shortName>
        <ecNumber evidence="1">2.1.2.1</ecNumber>
    </recommendedName>
</protein>
<keyword id="KW-0028">Amino-acid biosynthesis</keyword>
<keyword id="KW-0963">Cytoplasm</keyword>
<keyword id="KW-0554">One-carbon metabolism</keyword>
<keyword id="KW-0663">Pyridoxal phosphate</keyword>
<keyword id="KW-1185">Reference proteome</keyword>
<keyword id="KW-0808">Transferase</keyword>
<feature type="chain" id="PRO_0000113550" description="Serine hydroxymethyltransferase 1">
    <location>
        <begin position="1"/>
        <end position="415"/>
    </location>
</feature>
<feature type="binding site" evidence="1">
    <location>
        <position position="122"/>
    </location>
    <ligand>
        <name>(6S)-5,6,7,8-tetrahydrofolate</name>
        <dbReference type="ChEBI" id="CHEBI:57453"/>
    </ligand>
</feature>
<feature type="binding site" evidence="1">
    <location>
        <begin position="126"/>
        <end position="128"/>
    </location>
    <ligand>
        <name>(6S)-5,6,7,8-tetrahydrofolate</name>
        <dbReference type="ChEBI" id="CHEBI:57453"/>
    </ligand>
</feature>
<feature type="site" description="Plays an important role in substrate specificity" evidence="1">
    <location>
        <position position="229"/>
    </location>
</feature>
<feature type="modified residue" description="N6-(pyridoxal phosphate)lysine" evidence="1">
    <location>
        <position position="230"/>
    </location>
</feature>